<comment type="function">
    <text evidence="1">Catalyzes the thiamine diphosphate-dependent decarboxylation of 2-oxoglutarate and the subsequent addition of the resulting succinic semialdehyde-thiamine pyrophosphate anion to isochorismate to yield 2-succinyl-5-enolpyruvyl-6-hydroxy-3-cyclohexene-1-carboxylate (SEPHCHC).</text>
</comment>
<comment type="catalytic activity">
    <reaction evidence="1">
        <text>isochorismate + 2-oxoglutarate + H(+) = 5-enolpyruvoyl-6-hydroxy-2-succinyl-cyclohex-3-ene-1-carboxylate + CO2</text>
        <dbReference type="Rhea" id="RHEA:25593"/>
        <dbReference type="ChEBI" id="CHEBI:15378"/>
        <dbReference type="ChEBI" id="CHEBI:16526"/>
        <dbReference type="ChEBI" id="CHEBI:16810"/>
        <dbReference type="ChEBI" id="CHEBI:29780"/>
        <dbReference type="ChEBI" id="CHEBI:58818"/>
        <dbReference type="EC" id="2.2.1.9"/>
    </reaction>
</comment>
<comment type="cofactor">
    <cofactor evidence="1">
        <name>Mg(2+)</name>
        <dbReference type="ChEBI" id="CHEBI:18420"/>
    </cofactor>
    <cofactor evidence="1">
        <name>Mn(2+)</name>
        <dbReference type="ChEBI" id="CHEBI:29035"/>
    </cofactor>
</comment>
<comment type="cofactor">
    <cofactor evidence="1">
        <name>thiamine diphosphate</name>
        <dbReference type="ChEBI" id="CHEBI:58937"/>
    </cofactor>
    <text evidence="1">Binds 1 thiamine pyrophosphate per subunit.</text>
</comment>
<comment type="pathway">
    <text evidence="1">Quinol/quinone metabolism; 1,4-dihydroxy-2-naphthoate biosynthesis; 1,4-dihydroxy-2-naphthoate from chorismate: step 2/7.</text>
</comment>
<comment type="pathway">
    <text evidence="1">Quinol/quinone metabolism; menaquinone biosynthesis.</text>
</comment>
<comment type="subunit">
    <text evidence="1">Homodimer.</text>
</comment>
<comment type="similarity">
    <text evidence="1">Belongs to the TPP enzyme family. MenD subfamily.</text>
</comment>
<sequence>MNNPQLTTVWSSVMVEELIRQGASFFCISPGSRSTPLTAAIARNPEASWKMFPDERSAGFFALGHARATGFPAVLVCTSGTAVANYLPAVVEASNDRIPMLILSADRPFELRECGANQTIRQNGIFGTFTRWQMELPEPSTSIPLQSLLSTIAHGVEKSLNSPRGPVHLNQPFREPFEPESCSTPEPWLEPLQAWQTGRRPSTVAAQPEKHPDMDSMRTLRELTGNARQPLIIAGNSTDENDSHAIAELADDLQVPLYADMTSGLRFSSSILPWQQAFASPEFRNAFRPDLVIHFGGGLISRHPSDALKQWKPDHLAVIRNHPGRYSPDHSVTLSIEASLRLTADALRGCRTGASALMAPAKRFFTEADREIAAATAPDLPVSEIGTARIVSELLPPDHLLFLSNSMPVRAMDSYAHTGKENPIKTGTNRGASGIDGIISTAAGFAEGHGQPLCLMIGDLAFLHDLNALSLINSLRVPIQLILLNNNGGGIFSFLPVSEFDDIFEPNFATPQNFSGRPAAAMFGLDYTAPLTNSEFRESLLSALNSNRSTIIEVVCSRSENVRLHRALQARLGLLATEAFFIP</sequence>
<reference key="1">
    <citation type="submission" date="2007-03" db="EMBL/GenBank/DDBJ databases">
        <title>Complete sequence of Prosthecochloris vibrioformis DSM 265.</title>
        <authorList>
            <consortium name="US DOE Joint Genome Institute"/>
            <person name="Copeland A."/>
            <person name="Lucas S."/>
            <person name="Lapidus A."/>
            <person name="Barry K."/>
            <person name="Detter J.C."/>
            <person name="Glavina del Rio T."/>
            <person name="Hammon N."/>
            <person name="Israni S."/>
            <person name="Pitluck S."/>
            <person name="Schmutz J."/>
            <person name="Larimer F."/>
            <person name="Land M."/>
            <person name="Hauser L."/>
            <person name="Mikhailova N."/>
            <person name="Li T."/>
            <person name="Overmann J."/>
            <person name="Schuster S.C."/>
            <person name="Bryant D.A."/>
            <person name="Richardson P."/>
        </authorList>
    </citation>
    <scope>NUCLEOTIDE SEQUENCE [LARGE SCALE GENOMIC DNA]</scope>
    <source>
        <strain>DSM 265 / 1930</strain>
    </source>
</reference>
<keyword id="KW-0460">Magnesium</keyword>
<keyword id="KW-0464">Manganese</keyword>
<keyword id="KW-0474">Menaquinone biosynthesis</keyword>
<keyword id="KW-0479">Metal-binding</keyword>
<keyword id="KW-0786">Thiamine pyrophosphate</keyword>
<keyword id="KW-0808">Transferase</keyword>
<organism>
    <name type="scientific">Chlorobium phaeovibrioides (strain DSM 265 / 1930)</name>
    <name type="common">Prosthecochloris vibrioformis (strain DSM 265)</name>
    <dbReference type="NCBI Taxonomy" id="290318"/>
    <lineage>
        <taxon>Bacteria</taxon>
        <taxon>Pseudomonadati</taxon>
        <taxon>Chlorobiota</taxon>
        <taxon>Chlorobiia</taxon>
        <taxon>Chlorobiales</taxon>
        <taxon>Chlorobiaceae</taxon>
        <taxon>Chlorobium/Pelodictyon group</taxon>
        <taxon>Chlorobium</taxon>
    </lineage>
</organism>
<proteinExistence type="inferred from homology"/>
<dbReference type="EC" id="2.2.1.9" evidence="1"/>
<dbReference type="EMBL" id="CP000607">
    <property type="protein sequence ID" value="ABP36419.1"/>
    <property type="molecule type" value="Genomic_DNA"/>
</dbReference>
<dbReference type="SMR" id="A4SD60"/>
<dbReference type="STRING" id="290318.Cvib_0397"/>
<dbReference type="KEGG" id="pvi:Cvib_0397"/>
<dbReference type="eggNOG" id="COG1165">
    <property type="taxonomic scope" value="Bacteria"/>
</dbReference>
<dbReference type="HOGENOM" id="CLU_006051_3_0_10"/>
<dbReference type="OrthoDB" id="9791859at2"/>
<dbReference type="UniPathway" id="UPA00079"/>
<dbReference type="UniPathway" id="UPA01057">
    <property type="reaction ID" value="UER00164"/>
</dbReference>
<dbReference type="GO" id="GO:0070204">
    <property type="term" value="F:2-succinyl-5-enolpyruvyl-6-hydroxy-3-cyclohexene-1-carboxylic-acid synthase activity"/>
    <property type="evidence" value="ECO:0007669"/>
    <property type="project" value="UniProtKB-UniRule"/>
</dbReference>
<dbReference type="GO" id="GO:0000287">
    <property type="term" value="F:magnesium ion binding"/>
    <property type="evidence" value="ECO:0007669"/>
    <property type="project" value="UniProtKB-UniRule"/>
</dbReference>
<dbReference type="GO" id="GO:0030145">
    <property type="term" value="F:manganese ion binding"/>
    <property type="evidence" value="ECO:0007669"/>
    <property type="project" value="UniProtKB-UniRule"/>
</dbReference>
<dbReference type="GO" id="GO:0030976">
    <property type="term" value="F:thiamine pyrophosphate binding"/>
    <property type="evidence" value="ECO:0007669"/>
    <property type="project" value="UniProtKB-UniRule"/>
</dbReference>
<dbReference type="GO" id="GO:0009234">
    <property type="term" value="P:menaquinone biosynthetic process"/>
    <property type="evidence" value="ECO:0007669"/>
    <property type="project" value="UniProtKB-UniRule"/>
</dbReference>
<dbReference type="CDD" id="cd07037">
    <property type="entry name" value="TPP_PYR_MenD"/>
    <property type="match status" value="1"/>
</dbReference>
<dbReference type="CDD" id="cd02009">
    <property type="entry name" value="TPP_SHCHC_synthase"/>
    <property type="match status" value="1"/>
</dbReference>
<dbReference type="Gene3D" id="3.40.50.970">
    <property type="match status" value="2"/>
</dbReference>
<dbReference type="Gene3D" id="3.40.50.1220">
    <property type="entry name" value="TPP-binding domain"/>
    <property type="match status" value="1"/>
</dbReference>
<dbReference type="HAMAP" id="MF_01659">
    <property type="entry name" value="MenD"/>
    <property type="match status" value="1"/>
</dbReference>
<dbReference type="InterPro" id="IPR006189">
    <property type="entry name" value="CHASE_dom"/>
</dbReference>
<dbReference type="InterPro" id="IPR029035">
    <property type="entry name" value="DHS-like_NAD/FAD-binding_dom"/>
</dbReference>
<dbReference type="InterPro" id="IPR004433">
    <property type="entry name" value="MenaQ_synth_MenD"/>
</dbReference>
<dbReference type="InterPro" id="IPR032264">
    <property type="entry name" value="MenD_middle"/>
</dbReference>
<dbReference type="InterPro" id="IPR029061">
    <property type="entry name" value="THDP-binding"/>
</dbReference>
<dbReference type="InterPro" id="IPR012001">
    <property type="entry name" value="Thiamin_PyroP_enz_TPP-bd_dom"/>
</dbReference>
<dbReference type="InterPro" id="IPR011766">
    <property type="entry name" value="TPP_enzyme_TPP-bd"/>
</dbReference>
<dbReference type="NCBIfam" id="TIGR00173">
    <property type="entry name" value="menD"/>
    <property type="match status" value="1"/>
</dbReference>
<dbReference type="PANTHER" id="PTHR42916">
    <property type="entry name" value="2-SUCCINYL-5-ENOLPYRUVYL-6-HYDROXY-3-CYCLOHEXENE-1-CARBOXYLATE SYNTHASE"/>
    <property type="match status" value="1"/>
</dbReference>
<dbReference type="PANTHER" id="PTHR42916:SF1">
    <property type="entry name" value="PROTEIN PHYLLO, CHLOROPLASTIC"/>
    <property type="match status" value="1"/>
</dbReference>
<dbReference type="Pfam" id="PF02775">
    <property type="entry name" value="TPP_enzyme_C"/>
    <property type="match status" value="1"/>
</dbReference>
<dbReference type="Pfam" id="PF16582">
    <property type="entry name" value="TPP_enzyme_M_2"/>
    <property type="match status" value="1"/>
</dbReference>
<dbReference type="Pfam" id="PF02776">
    <property type="entry name" value="TPP_enzyme_N"/>
    <property type="match status" value="1"/>
</dbReference>
<dbReference type="PIRSF" id="PIRSF004983">
    <property type="entry name" value="MenD"/>
    <property type="match status" value="1"/>
</dbReference>
<dbReference type="SUPFAM" id="SSF52467">
    <property type="entry name" value="DHS-like NAD/FAD-binding domain"/>
    <property type="match status" value="1"/>
</dbReference>
<dbReference type="SUPFAM" id="SSF52518">
    <property type="entry name" value="Thiamin diphosphate-binding fold (THDP-binding)"/>
    <property type="match status" value="2"/>
</dbReference>
<accession>A4SD60</accession>
<protein>
    <recommendedName>
        <fullName evidence="1">2-succinyl-5-enolpyruvyl-6-hydroxy-3-cyclohexene-1-carboxylate synthase</fullName>
        <shortName evidence="1">SEPHCHC synthase</shortName>
        <ecNumber evidence="1">2.2.1.9</ecNumber>
    </recommendedName>
    <alternativeName>
        <fullName evidence="1">Menaquinone biosynthesis protein MenD</fullName>
    </alternativeName>
</protein>
<evidence type="ECO:0000255" key="1">
    <source>
        <dbReference type="HAMAP-Rule" id="MF_01659"/>
    </source>
</evidence>
<gene>
    <name evidence="1" type="primary">menD</name>
    <name type="ordered locus">Cvib_0397</name>
</gene>
<feature type="chain" id="PRO_0000341810" description="2-succinyl-5-enolpyruvyl-6-hydroxy-3-cyclohexene-1-carboxylate synthase">
    <location>
        <begin position="1"/>
        <end position="583"/>
    </location>
</feature>
<name>MEND_CHLPM</name>